<protein>
    <recommendedName>
        <fullName evidence="1">Large ribosomal subunit protein uL4</fullName>
    </recommendedName>
    <alternativeName>
        <fullName evidence="3">50S ribosomal protein L4</fullName>
    </alternativeName>
</protein>
<proteinExistence type="inferred from homology"/>
<dbReference type="EMBL" id="CP000512">
    <property type="protein sequence ID" value="ABM30946.1"/>
    <property type="molecule type" value="Genomic_DNA"/>
</dbReference>
<dbReference type="RefSeq" id="WP_011793523.1">
    <property type="nucleotide sequence ID" value="NC_008752.1"/>
</dbReference>
<dbReference type="SMR" id="A1TJ08"/>
<dbReference type="STRING" id="397945.Aave_0339"/>
<dbReference type="GeneID" id="79790144"/>
<dbReference type="KEGG" id="aav:Aave_0339"/>
<dbReference type="eggNOG" id="COG0088">
    <property type="taxonomic scope" value="Bacteria"/>
</dbReference>
<dbReference type="HOGENOM" id="CLU_041575_5_2_4"/>
<dbReference type="OrthoDB" id="9803201at2"/>
<dbReference type="Proteomes" id="UP000002596">
    <property type="component" value="Chromosome"/>
</dbReference>
<dbReference type="GO" id="GO:1990904">
    <property type="term" value="C:ribonucleoprotein complex"/>
    <property type="evidence" value="ECO:0007669"/>
    <property type="project" value="UniProtKB-KW"/>
</dbReference>
<dbReference type="GO" id="GO:0005840">
    <property type="term" value="C:ribosome"/>
    <property type="evidence" value="ECO:0007669"/>
    <property type="project" value="UniProtKB-KW"/>
</dbReference>
<dbReference type="GO" id="GO:0019843">
    <property type="term" value="F:rRNA binding"/>
    <property type="evidence" value="ECO:0007669"/>
    <property type="project" value="UniProtKB-UniRule"/>
</dbReference>
<dbReference type="GO" id="GO:0003735">
    <property type="term" value="F:structural constituent of ribosome"/>
    <property type="evidence" value="ECO:0007669"/>
    <property type="project" value="InterPro"/>
</dbReference>
<dbReference type="GO" id="GO:0006412">
    <property type="term" value="P:translation"/>
    <property type="evidence" value="ECO:0007669"/>
    <property type="project" value="UniProtKB-UniRule"/>
</dbReference>
<dbReference type="Gene3D" id="3.40.1370.10">
    <property type="match status" value="1"/>
</dbReference>
<dbReference type="HAMAP" id="MF_01328_B">
    <property type="entry name" value="Ribosomal_uL4_B"/>
    <property type="match status" value="1"/>
</dbReference>
<dbReference type="InterPro" id="IPR002136">
    <property type="entry name" value="Ribosomal_uL4"/>
</dbReference>
<dbReference type="InterPro" id="IPR013005">
    <property type="entry name" value="Ribosomal_uL4-like"/>
</dbReference>
<dbReference type="InterPro" id="IPR023574">
    <property type="entry name" value="Ribosomal_uL4_dom_sf"/>
</dbReference>
<dbReference type="NCBIfam" id="TIGR03953">
    <property type="entry name" value="rplD_bact"/>
    <property type="match status" value="1"/>
</dbReference>
<dbReference type="PANTHER" id="PTHR10746">
    <property type="entry name" value="50S RIBOSOMAL PROTEIN L4"/>
    <property type="match status" value="1"/>
</dbReference>
<dbReference type="PANTHER" id="PTHR10746:SF6">
    <property type="entry name" value="LARGE RIBOSOMAL SUBUNIT PROTEIN UL4M"/>
    <property type="match status" value="1"/>
</dbReference>
<dbReference type="Pfam" id="PF00573">
    <property type="entry name" value="Ribosomal_L4"/>
    <property type="match status" value="1"/>
</dbReference>
<dbReference type="SUPFAM" id="SSF52166">
    <property type="entry name" value="Ribosomal protein L4"/>
    <property type="match status" value="1"/>
</dbReference>
<gene>
    <name evidence="1" type="primary">rplD</name>
    <name type="ordered locus">Aave_0339</name>
</gene>
<reference key="1">
    <citation type="submission" date="2006-12" db="EMBL/GenBank/DDBJ databases">
        <title>Complete sequence of Acidovorax avenae subsp. citrulli AAC00-1.</title>
        <authorList>
            <person name="Copeland A."/>
            <person name="Lucas S."/>
            <person name="Lapidus A."/>
            <person name="Barry K."/>
            <person name="Detter J.C."/>
            <person name="Glavina del Rio T."/>
            <person name="Dalin E."/>
            <person name="Tice H."/>
            <person name="Pitluck S."/>
            <person name="Kiss H."/>
            <person name="Brettin T."/>
            <person name="Bruce D."/>
            <person name="Han C."/>
            <person name="Tapia R."/>
            <person name="Gilna P."/>
            <person name="Schmutz J."/>
            <person name="Larimer F."/>
            <person name="Land M."/>
            <person name="Hauser L."/>
            <person name="Kyrpides N."/>
            <person name="Kim E."/>
            <person name="Stahl D."/>
            <person name="Richardson P."/>
        </authorList>
    </citation>
    <scope>NUCLEOTIDE SEQUENCE [LARGE SCALE GENOMIC DNA]</scope>
    <source>
        <strain>AAC00-1</strain>
    </source>
</reference>
<feature type="chain" id="PRO_1000052343" description="Large ribosomal subunit protein uL4">
    <location>
        <begin position="1"/>
        <end position="206"/>
    </location>
</feature>
<feature type="region of interest" description="Disordered" evidence="2">
    <location>
        <begin position="46"/>
        <end position="77"/>
    </location>
</feature>
<organism>
    <name type="scientific">Paracidovorax citrulli (strain AAC00-1)</name>
    <name type="common">Acidovorax citrulli</name>
    <dbReference type="NCBI Taxonomy" id="397945"/>
    <lineage>
        <taxon>Bacteria</taxon>
        <taxon>Pseudomonadati</taxon>
        <taxon>Pseudomonadota</taxon>
        <taxon>Betaproteobacteria</taxon>
        <taxon>Burkholderiales</taxon>
        <taxon>Comamonadaceae</taxon>
        <taxon>Paracidovorax</taxon>
    </lineage>
</organism>
<comment type="function">
    <text evidence="1">One of the primary rRNA binding proteins, this protein initially binds near the 5'-end of the 23S rRNA. It is important during the early stages of 50S assembly. It makes multiple contacts with different domains of the 23S rRNA in the assembled 50S subunit and ribosome.</text>
</comment>
<comment type="function">
    <text evidence="1">Forms part of the polypeptide exit tunnel.</text>
</comment>
<comment type="subunit">
    <text evidence="1">Part of the 50S ribosomal subunit.</text>
</comment>
<comment type="similarity">
    <text evidence="1">Belongs to the universal ribosomal protein uL4 family.</text>
</comment>
<accession>A1TJ08</accession>
<name>RL4_PARC0</name>
<sequence length="206" mass="23279">MQLELLNDQGQAASKIDVPETVFDRQYNEDLIHQIVVAYRANARQGTRAQKDREQVRHSTKKPFKQKGTGNARAGMTSSPLWRGGGRIFPNLPEENFTQKINKKMYRAGMASILSQLAREGRLAVVDSLKVETPKTKVLADKFKAMNLQSVMVISDEVDENLYLASRNLKNVFVVEPRYADPVSLVHYKKVLVTKGAIDKLKEMFA</sequence>
<keyword id="KW-0687">Ribonucleoprotein</keyword>
<keyword id="KW-0689">Ribosomal protein</keyword>
<keyword id="KW-0694">RNA-binding</keyword>
<keyword id="KW-0699">rRNA-binding</keyword>
<evidence type="ECO:0000255" key="1">
    <source>
        <dbReference type="HAMAP-Rule" id="MF_01328"/>
    </source>
</evidence>
<evidence type="ECO:0000256" key="2">
    <source>
        <dbReference type="SAM" id="MobiDB-lite"/>
    </source>
</evidence>
<evidence type="ECO:0000305" key="3"/>